<sequence length="656" mass="70333">MGGFPEATGNLLDAAAQEFHPTVCAPYPLQPLPQQLYCPHPYPAMPVPPPPQIAMLQPVPPMAMAMAPQPGYTLPTTTPVVNGPSSRVVVLGLVPPHAQEADVAQAMAPFGAIRSVDACAVASEGVATVHFFDIRAAELALTCVREQHMRQQSRLGQLYAAAAVAPAWAPAPTPQAWDWPHPNDDGRGLVLGHAVWAHFATGADDGDNRGSLVVLSPLPGVSVADLRQVFQAFGDLKDVRESAQRPSHKFVDFFDTRDAARALAELNGQELFGRRLVVEFTRPSGPGPRRRGYAPHQHRPTAPTPPRLQATWRPSQPTSSQPPASSSSSGSVRAREGVVLLRRSSCKSSAGSDQSSKGGNAGTSHERKTKGGKIVVAAAAASSSTPTASGKQTQKGVGSSGGGSWKGRKSGWEARFLFKEPEAGGGADTQATPASEMDTRTTVMIRNIPNKYSQKLLLNMLDNHCIQSNEWIVASGEEQPFSAYDFVYLPIDFNNKCNVGYGFVNLTSPEARVRLYKAFHKQPWEVYNSRKICQVTYARVQGLEALKEHFKNSKFPCDSDEYLPVAFSPARDGKELTDPVPIVGRSPAASSASSPPKSRAASVDRLGQELMPAPSSSADGASSTTTSTHAPSEHDEEEEEGDIRLAGELRRLGYDD</sequence>
<evidence type="ECO:0000255" key="1">
    <source>
        <dbReference type="PROSITE-ProRule" id="PRU00176"/>
    </source>
</evidence>
<evidence type="ECO:0000256" key="2">
    <source>
        <dbReference type="SAM" id="MobiDB-lite"/>
    </source>
</evidence>
<evidence type="ECO:0000269" key="3">
    <source>
    </source>
</evidence>
<proteinExistence type="evidence at transcript level"/>
<comment type="function">
    <text evidence="3">Probable RNA-binding protein. Involved in the regulation of leaf initiation rate and shoot development. Seems to act more predominantly in the early stages of the leaf development, rather than in the later phase.</text>
</comment>
<comment type="tissue specificity">
    <text evidence="3">Expressed below the shoot tip down the flanks of shoot apex in an alternating pattern. Not expressed in root tips, leaves or immature ears (female inflorescences).</text>
</comment>
<comment type="disruption phenotype">
    <text evidence="3">Plants almost double the number of leaves, and plant height are reduced to about the half that of the wild-type. Internode number is increased and their elongation is significantly reduced. The terminal tassel (terminal male inflorescence) is replaced by an ear-like (female-like) inflorescence.</text>
</comment>
<reference key="1">
    <citation type="journal article" date="1998" name="Nature">
        <title>Regulation of leaf initiation by the terminal ear 1 gene of maize.</title>
        <authorList>
            <person name="Veit B."/>
            <person name="Briggs S.P."/>
            <person name="Schmidt R.J."/>
            <person name="Yanofsky M.F."/>
            <person name="Hake S."/>
        </authorList>
    </citation>
    <scope>NUCLEOTIDE SEQUENCE [GENOMIC DNA / MRNA]</scope>
    <scope>FUNCTION</scope>
    <scope>TISSUE SPECIFICITY</scope>
    <scope>DISRUPTION PHENOTYPE</scope>
    <source>
        <tissue>Shoot apex</tissue>
    </source>
</reference>
<organism>
    <name type="scientific">Zea mays</name>
    <name type="common">Maize</name>
    <dbReference type="NCBI Taxonomy" id="4577"/>
    <lineage>
        <taxon>Eukaryota</taxon>
        <taxon>Viridiplantae</taxon>
        <taxon>Streptophyta</taxon>
        <taxon>Embryophyta</taxon>
        <taxon>Tracheophyta</taxon>
        <taxon>Spermatophyta</taxon>
        <taxon>Magnoliopsida</taxon>
        <taxon>Liliopsida</taxon>
        <taxon>Poales</taxon>
        <taxon>Poaceae</taxon>
        <taxon>PACMAD clade</taxon>
        <taxon>Panicoideae</taxon>
        <taxon>Andropogonodae</taxon>
        <taxon>Andropogoneae</taxon>
        <taxon>Tripsacinae</taxon>
        <taxon>Zea</taxon>
    </lineage>
</organism>
<dbReference type="EMBL" id="AF047852">
    <property type="protein sequence ID" value="AAC39463.1"/>
    <property type="molecule type" value="mRNA"/>
</dbReference>
<dbReference type="EMBL" id="AF348319">
    <property type="protein sequence ID" value="AAK29419.1"/>
    <property type="molecule type" value="Genomic_DNA"/>
</dbReference>
<dbReference type="PIR" id="T01573">
    <property type="entry name" value="T01573"/>
</dbReference>
<dbReference type="RefSeq" id="NP_001104903.1">
    <property type="nucleotide sequence ID" value="NM_001111433.1"/>
</dbReference>
<dbReference type="SMR" id="O65001"/>
<dbReference type="FunCoup" id="O65001">
    <property type="interactions" value="1850"/>
</dbReference>
<dbReference type="STRING" id="4577.O65001"/>
<dbReference type="PaxDb" id="4577-GRMZM2G085113_P01"/>
<dbReference type="GeneID" id="541683"/>
<dbReference type="KEGG" id="zma:541683"/>
<dbReference type="MaizeGDB" id="100080"/>
<dbReference type="eggNOG" id="KOG4660">
    <property type="taxonomic scope" value="Eukaryota"/>
</dbReference>
<dbReference type="InParanoid" id="O65001"/>
<dbReference type="OrthoDB" id="417481at2759"/>
<dbReference type="Proteomes" id="UP000007305">
    <property type="component" value="Unplaced"/>
</dbReference>
<dbReference type="ExpressionAtlas" id="O65001">
    <property type="expression patterns" value="baseline"/>
</dbReference>
<dbReference type="GO" id="GO:0016607">
    <property type="term" value="C:nuclear speck"/>
    <property type="evidence" value="ECO:0000318"/>
    <property type="project" value="GO_Central"/>
</dbReference>
<dbReference type="GO" id="GO:0003723">
    <property type="term" value="F:RNA binding"/>
    <property type="evidence" value="ECO:0000318"/>
    <property type="project" value="GO_Central"/>
</dbReference>
<dbReference type="CDD" id="cd12530">
    <property type="entry name" value="RRM3_EAR1_like"/>
    <property type="match status" value="1"/>
</dbReference>
<dbReference type="FunFam" id="3.30.70.330:FF:000750">
    <property type="entry name" value="Protein terminal ear1 homolog"/>
    <property type="match status" value="1"/>
</dbReference>
<dbReference type="FunFam" id="3.30.70.330:FF:001402">
    <property type="entry name" value="Terminal EAR1-like 1"/>
    <property type="match status" value="1"/>
</dbReference>
<dbReference type="Gene3D" id="3.30.70.330">
    <property type="match status" value="2"/>
</dbReference>
<dbReference type="InterPro" id="IPR034458">
    <property type="entry name" value="EAR1-like_RRM3"/>
</dbReference>
<dbReference type="InterPro" id="IPR007201">
    <property type="entry name" value="Mei2-like_Rrm_C"/>
</dbReference>
<dbReference type="InterPro" id="IPR012677">
    <property type="entry name" value="Nucleotide-bd_a/b_plait_sf"/>
</dbReference>
<dbReference type="InterPro" id="IPR035979">
    <property type="entry name" value="RBD_domain_sf"/>
</dbReference>
<dbReference type="InterPro" id="IPR000504">
    <property type="entry name" value="RRM_dom"/>
</dbReference>
<dbReference type="PANTHER" id="PTHR23189">
    <property type="entry name" value="RNA RECOGNITION MOTIF-CONTAINING"/>
    <property type="match status" value="1"/>
</dbReference>
<dbReference type="Pfam" id="PF00076">
    <property type="entry name" value="RRM_1"/>
    <property type="match status" value="2"/>
</dbReference>
<dbReference type="Pfam" id="PF04059">
    <property type="entry name" value="RRM_2"/>
    <property type="match status" value="1"/>
</dbReference>
<dbReference type="SMART" id="SM00360">
    <property type="entry name" value="RRM"/>
    <property type="match status" value="2"/>
</dbReference>
<dbReference type="SUPFAM" id="SSF54928">
    <property type="entry name" value="RNA-binding domain, RBD"/>
    <property type="match status" value="2"/>
</dbReference>
<dbReference type="PROSITE" id="PS50102">
    <property type="entry name" value="RRM"/>
    <property type="match status" value="1"/>
</dbReference>
<protein>
    <recommendedName>
        <fullName>Protein terminal ear1</fullName>
    </recommendedName>
</protein>
<gene>
    <name type="primary">TE1</name>
</gene>
<accession>O65001</accession>
<name>TE1_MAIZE</name>
<keyword id="KW-0217">Developmental protein</keyword>
<keyword id="KW-1185">Reference proteome</keyword>
<keyword id="KW-0677">Repeat</keyword>
<keyword id="KW-0694">RNA-binding</keyword>
<feature type="chain" id="PRO_0000239990" description="Protein terminal ear1">
    <location>
        <begin position="1"/>
        <end position="656"/>
    </location>
</feature>
<feature type="domain" description="RRM" evidence="1">
    <location>
        <begin position="211"/>
        <end position="283"/>
    </location>
</feature>
<feature type="region of interest" description="Disordered" evidence="2">
    <location>
        <begin position="280"/>
        <end position="408"/>
    </location>
</feature>
<feature type="region of interest" description="Disordered" evidence="2">
    <location>
        <begin position="576"/>
        <end position="656"/>
    </location>
</feature>
<feature type="compositionally biased region" description="Basic residues" evidence="2">
    <location>
        <begin position="288"/>
        <end position="299"/>
    </location>
</feature>
<feature type="compositionally biased region" description="Low complexity" evidence="2">
    <location>
        <begin position="314"/>
        <end position="331"/>
    </location>
</feature>
<feature type="compositionally biased region" description="Polar residues" evidence="2">
    <location>
        <begin position="346"/>
        <end position="358"/>
    </location>
</feature>
<feature type="compositionally biased region" description="Low complexity" evidence="2">
    <location>
        <begin position="377"/>
        <end position="397"/>
    </location>
</feature>
<feature type="compositionally biased region" description="Low complexity" evidence="2">
    <location>
        <begin position="585"/>
        <end position="601"/>
    </location>
</feature>
<feature type="compositionally biased region" description="Low complexity" evidence="2">
    <location>
        <begin position="612"/>
        <end position="630"/>
    </location>
</feature>
<feature type="compositionally biased region" description="Basic and acidic residues" evidence="2">
    <location>
        <begin position="642"/>
        <end position="656"/>
    </location>
</feature>